<dbReference type="EC" id="4.2.3.59" evidence="3"/>
<dbReference type="EC" id="4.2.3.40" evidence="3"/>
<dbReference type="EC" id="4.2.3.-" evidence="3"/>
<dbReference type="EMBL" id="JN412091">
    <property type="protein sequence ID" value="AEP82782.1"/>
    <property type="molecule type" value="Genomic_DNA"/>
</dbReference>
<dbReference type="RefSeq" id="NP_001318113.1">
    <property type="nucleotide sequence ID" value="NM_001331184.1"/>
</dbReference>
<dbReference type="SMR" id="G5CV54"/>
<dbReference type="STRING" id="4081.G5CV54"/>
<dbReference type="PaxDb" id="4081-Solyc09g092470.2.1"/>
<dbReference type="EnsemblPlants" id="Solyc09g092470.2.1">
    <property type="protein sequence ID" value="Solyc09g092470.2.1"/>
    <property type="gene ID" value="Solyc09g092470.2"/>
</dbReference>
<dbReference type="GeneID" id="101249861"/>
<dbReference type="Gramene" id="Solyc09g092470.2.1">
    <property type="protein sequence ID" value="Solyc09g092470.2.1"/>
    <property type="gene ID" value="Solyc09g092470.2"/>
</dbReference>
<dbReference type="KEGG" id="sly:101249861"/>
<dbReference type="eggNOG" id="ENOG502QUCN">
    <property type="taxonomic scope" value="Eukaryota"/>
</dbReference>
<dbReference type="HOGENOM" id="CLU_003125_7_2_1"/>
<dbReference type="InParanoid" id="G5CV54"/>
<dbReference type="OMA" id="DPAMDKQ"/>
<dbReference type="OrthoDB" id="1271169at2759"/>
<dbReference type="PhylomeDB" id="G5CV54"/>
<dbReference type="UniPathway" id="UPA00213"/>
<dbReference type="Proteomes" id="UP000004994">
    <property type="component" value="Chromosome 9"/>
</dbReference>
<dbReference type="GO" id="GO:0000287">
    <property type="term" value="F:magnesium ion binding"/>
    <property type="evidence" value="ECO:0007669"/>
    <property type="project" value="InterPro"/>
</dbReference>
<dbReference type="GO" id="GO:0010333">
    <property type="term" value="F:terpene synthase activity"/>
    <property type="evidence" value="ECO:0000314"/>
    <property type="project" value="UniProtKB"/>
</dbReference>
<dbReference type="GO" id="GO:0016102">
    <property type="term" value="P:diterpenoid biosynthetic process"/>
    <property type="evidence" value="ECO:0007669"/>
    <property type="project" value="InterPro"/>
</dbReference>
<dbReference type="GO" id="GO:0016114">
    <property type="term" value="P:terpenoid biosynthetic process"/>
    <property type="evidence" value="ECO:0000314"/>
    <property type="project" value="UniProtKB"/>
</dbReference>
<dbReference type="CDD" id="cd00684">
    <property type="entry name" value="Terpene_cyclase_plant_C1"/>
    <property type="match status" value="1"/>
</dbReference>
<dbReference type="FunFam" id="1.10.600.10:FF:000007">
    <property type="entry name" value="Isoprene synthase, chloroplastic"/>
    <property type="match status" value="1"/>
</dbReference>
<dbReference type="FunFam" id="1.50.10.130:FF:000001">
    <property type="entry name" value="Isoprene synthase, chloroplastic"/>
    <property type="match status" value="1"/>
</dbReference>
<dbReference type="Gene3D" id="1.10.600.10">
    <property type="entry name" value="Farnesyl Diphosphate Synthase"/>
    <property type="match status" value="1"/>
</dbReference>
<dbReference type="Gene3D" id="1.50.10.130">
    <property type="entry name" value="Terpene synthase, N-terminal domain"/>
    <property type="match status" value="1"/>
</dbReference>
<dbReference type="InterPro" id="IPR008949">
    <property type="entry name" value="Isoprenoid_synthase_dom_sf"/>
</dbReference>
<dbReference type="InterPro" id="IPR034741">
    <property type="entry name" value="Terpene_cyclase-like_1_C"/>
</dbReference>
<dbReference type="InterPro" id="IPR044814">
    <property type="entry name" value="Terpene_cyclase_plant_C1"/>
</dbReference>
<dbReference type="InterPro" id="IPR001906">
    <property type="entry name" value="Terpene_synth_N"/>
</dbReference>
<dbReference type="InterPro" id="IPR036965">
    <property type="entry name" value="Terpene_synth_N_sf"/>
</dbReference>
<dbReference type="InterPro" id="IPR050148">
    <property type="entry name" value="Terpene_synthase-like"/>
</dbReference>
<dbReference type="InterPro" id="IPR005630">
    <property type="entry name" value="Terpene_synthase_metal-bd"/>
</dbReference>
<dbReference type="InterPro" id="IPR008930">
    <property type="entry name" value="Terpenoid_cyclase/PrenylTrfase"/>
</dbReference>
<dbReference type="PANTHER" id="PTHR31225">
    <property type="entry name" value="OS04G0344100 PROTEIN-RELATED"/>
    <property type="match status" value="1"/>
</dbReference>
<dbReference type="PANTHER" id="PTHR31225:SF229">
    <property type="entry name" value="SESQUITERPENE SYNTHASE 14"/>
    <property type="match status" value="1"/>
</dbReference>
<dbReference type="Pfam" id="PF01397">
    <property type="entry name" value="Terpene_synth"/>
    <property type="match status" value="1"/>
</dbReference>
<dbReference type="Pfam" id="PF03936">
    <property type="entry name" value="Terpene_synth_C"/>
    <property type="match status" value="1"/>
</dbReference>
<dbReference type="SFLD" id="SFLDS00005">
    <property type="entry name" value="Isoprenoid_Synthase_Type_I"/>
    <property type="match status" value="1"/>
</dbReference>
<dbReference type="SFLD" id="SFLDG01019">
    <property type="entry name" value="Terpene_Cyclase_Like_1_C_Termi"/>
    <property type="match status" value="1"/>
</dbReference>
<dbReference type="SUPFAM" id="SSF48239">
    <property type="entry name" value="Terpenoid cyclases/Protein prenyltransferases"/>
    <property type="match status" value="1"/>
</dbReference>
<dbReference type="SUPFAM" id="SSF48576">
    <property type="entry name" value="Terpenoid synthases"/>
    <property type="match status" value="1"/>
</dbReference>
<feature type="chain" id="PRO_0000454691" description="Sesquiterpene synthase 14">
    <location>
        <begin position="1"/>
        <end position="568"/>
    </location>
</feature>
<feature type="short sequence motif" description="DDXXD motif" evidence="1">
    <location>
        <begin position="319"/>
        <end position="323"/>
    </location>
</feature>
<feature type="binding site" evidence="2">
    <location>
        <position position="319"/>
    </location>
    <ligand>
        <name>Mg(2+)</name>
        <dbReference type="ChEBI" id="CHEBI:18420"/>
        <label>1</label>
    </ligand>
</feature>
<feature type="binding site" evidence="2">
    <location>
        <position position="319"/>
    </location>
    <ligand>
        <name>Mg(2+)</name>
        <dbReference type="ChEBI" id="CHEBI:18420"/>
        <label>2</label>
    </ligand>
</feature>
<feature type="binding site" evidence="2">
    <location>
        <position position="323"/>
    </location>
    <ligand>
        <name>Mg(2+)</name>
        <dbReference type="ChEBI" id="CHEBI:18420"/>
        <label>1</label>
    </ligand>
</feature>
<feature type="binding site" evidence="2">
    <location>
        <position position="323"/>
    </location>
    <ligand>
        <name>Mg(2+)</name>
        <dbReference type="ChEBI" id="CHEBI:18420"/>
        <label>2</label>
    </ligand>
</feature>
<feature type="binding site" evidence="2">
    <location>
        <position position="463"/>
    </location>
    <ligand>
        <name>Mg(2+)</name>
        <dbReference type="ChEBI" id="CHEBI:18420"/>
        <label>3</label>
    </ligand>
</feature>
<feature type="binding site" evidence="2">
    <location>
        <position position="471"/>
    </location>
    <ligand>
        <name>Mg(2+)</name>
        <dbReference type="ChEBI" id="CHEBI:18420"/>
        <label>3</label>
    </ligand>
</feature>
<reference key="1">
    <citation type="journal article" date="2011" name="Plant Physiol.">
        <title>The tomato terpene synthase gene family.</title>
        <authorList>
            <person name="Falara V."/>
            <person name="Akhtar T.A."/>
            <person name="Nguyen T.T.H."/>
            <person name="Spyropoulou E.A."/>
            <person name="Bleeker P.M."/>
            <person name="Schauvinhold I."/>
            <person name="Matsuba Y."/>
            <person name="Bonini M.E."/>
            <person name="Schilmiller A.L."/>
            <person name="Last R.L."/>
            <person name="Schuurink R.C."/>
            <person name="Pichersky E."/>
        </authorList>
    </citation>
    <scope>NUCLEOTIDE SEQUENCE [GENOMIC DNA]</scope>
    <scope>FUNCTION</scope>
    <scope>CATALYTIC ACTIVITY</scope>
    <scope>TISSUE SPECIFICITY</scope>
    <scope>GENE FAMILY</scope>
    <source>
        <strain>cv. M82</strain>
    </source>
</reference>
<reference key="2">
    <citation type="journal article" date="2012" name="Nature">
        <title>The tomato genome sequence provides insights into fleshy fruit evolution.</title>
        <authorList>
            <consortium name="Tomato Genome Consortium"/>
        </authorList>
    </citation>
    <scope>NUCLEOTIDE SEQUENCE [LARGE SCALE GENOMIC DNA]</scope>
    <source>
        <strain>cv. Heinz 1706</strain>
    </source>
</reference>
<reference key="3">
    <citation type="journal article" date="2011" name="Plant Mol. Biol.">
        <title>RNA-seq discovery, functional characterization, and comparison of sesquiterpene synthases from Solanum lycopersicum and Solanum habrochaites trichomes.</title>
        <authorList>
            <person name="Bleeker P.M."/>
            <person name="Spyropoulou E.A."/>
            <person name="Diergaarde P.J."/>
            <person name="Volpin H."/>
            <person name="De Both M.T.J."/>
            <person name="Zerbe P."/>
            <person name="Bohlmann J."/>
            <person name="Falara V."/>
            <person name="Matsuba Y."/>
            <person name="Pichersky E."/>
            <person name="Haring M.A."/>
            <person name="Schuurink R.C."/>
        </authorList>
    </citation>
    <scope>FUNCTION</scope>
    <scope>CATALYTIC ACTIVITY</scope>
    <scope>PATHWAY</scope>
    <scope>TISSUE SPECIFICITY</scope>
    <scope>GENE FAMILY</scope>
    <source>
        <strain>cv. Moneymaker</strain>
    </source>
</reference>
<accession>G5CV54</accession>
<keyword id="KW-0456">Lyase</keyword>
<keyword id="KW-0460">Magnesium</keyword>
<keyword id="KW-0479">Metal-binding</keyword>
<keyword id="KW-1185">Reference proteome</keyword>
<sequence length="568" mass="66548">MATNLTLETDKEIKNMNQLSMIDTTITRPLANYHSSVWKNYFLSYTPQLTEISSQEKLELEELKEKVRQMLVETSDKSTQKLVLIDTIQRLGVAYHFDNEIKISIQNIFDEFEQNKNEDDNDLYIVALRFRLVRGQRHYMSSDVFKKFTNDDGKFKETLTKDVQGLLNLYEATHLRVHGEQILEEALSFTVTHLKSMSPKLDSSLKAQVSEALIQPIYTNVPRVVAPKYIRIYENIESHDDLLLKFVKLDFHILQKMHQRELSELTRWWKDLDHSNKYPYARDKLVECYFWATGVYFGPQYKRARRMITKLIVIITITDDLYDAYATYDELVPYTNAVERCEISAMDSISPYMRPLYQVFLDYFDEMEEELTKDGKAHYVYYAKVEMNKLIKSYLKEAEWLKNDIIPKCEEYKRNATITVANQMILITCLIVAGEFISKETFEWMINESLIAPASSLINRLKDDIIGHEHEQQREHGASFVECYVKEYRASKQEAYVEARRQIANAWKDINTDYLHATQVPTFVLQPALNLSRLVDILQEDDFTDSQNFLKDTIKLLFVDSVNSTSCG</sequence>
<name>TPS14_SOLLC</name>
<organism>
    <name type="scientific">Solanum lycopersicum</name>
    <name type="common">Tomato</name>
    <name type="synonym">Lycopersicon esculentum</name>
    <dbReference type="NCBI Taxonomy" id="4081"/>
    <lineage>
        <taxon>Eukaryota</taxon>
        <taxon>Viridiplantae</taxon>
        <taxon>Streptophyta</taxon>
        <taxon>Embryophyta</taxon>
        <taxon>Tracheophyta</taxon>
        <taxon>Spermatophyta</taxon>
        <taxon>Magnoliopsida</taxon>
        <taxon>eudicotyledons</taxon>
        <taxon>Gunneridae</taxon>
        <taxon>Pentapetalae</taxon>
        <taxon>asterids</taxon>
        <taxon>lamiids</taxon>
        <taxon>Solanales</taxon>
        <taxon>Solanaceae</taxon>
        <taxon>Solanoideae</taxon>
        <taxon>Solaneae</taxon>
        <taxon>Solanum</taxon>
        <taxon>Solanum subgen. Lycopersicon</taxon>
    </lineage>
</organism>
<protein>
    <recommendedName>
        <fullName evidence="5 6">Sesquiterpene synthase 14</fullName>
        <shortName evidence="5 6">SlTPS14</shortName>
        <shortName evidence="5">Terpene synthase 14</shortName>
    </recommendedName>
    <alternativeName>
        <fullName evidence="5">(E)-gamma-bisabolene synthase TPS14</fullName>
        <ecNumber evidence="3">4.2.3.59</ecNumber>
    </alternativeName>
    <alternativeName>
        <fullName evidence="5">(Z)-gamma-bisabolene synthase TPS14</fullName>
        <ecNumber evidence="3">4.2.3.40</ecNumber>
    </alternativeName>
    <alternativeName>
        <fullName evidence="5">Alpha-bisabolene synthase TPS14</fullName>
        <ecNumber evidence="3">4.2.3.-</ecNumber>
    </alternativeName>
    <alternativeName>
        <fullName evidence="5">Beta-bisabolene synthase TPS14</fullName>
        <ecNumber evidence="3">4.2.3.-</ecNumber>
    </alternativeName>
</protein>
<gene>
    <name evidence="5 6" type="primary">TPS14</name>
</gene>
<comment type="function">
    <text evidence="3 4">Sesquiterpene synthase involved in the biosynthesis of volatile compounds (PubMed:21818683). Mediates the conversion of (2E,6E)-farnesyl diphosphate ((EE)-FPP) into beta-bisabolene, and of (2Z,6Z)-farnesyl diphosphate ((ZZ)-FPP) into alpha-bisabolene, but also smaller amounts of (Z)-gamma-bisabolene, (E)-gamma-bisabolene and nerolidol (PubMed:21813655).</text>
</comment>
<comment type="catalytic activity">
    <reaction evidence="3">
        <text>(2Z,6Z)-farnesyl diphosphate = (E)-alpha-bisabolene + diphosphate</text>
        <dbReference type="Rhea" id="RHEA:68472"/>
        <dbReference type="ChEBI" id="CHEBI:33019"/>
        <dbReference type="ChEBI" id="CHEBI:49242"/>
        <dbReference type="ChEBI" id="CHEBI:60374"/>
    </reaction>
    <physiologicalReaction direction="left-to-right" evidence="3">
        <dbReference type="Rhea" id="RHEA:68473"/>
    </physiologicalReaction>
</comment>
<comment type="catalytic activity">
    <reaction evidence="3">
        <text>(2Z,6Z)-farnesyl diphosphate = beta-bisabolene + diphosphate</text>
        <dbReference type="Rhea" id="RHEA:68524"/>
        <dbReference type="ChEBI" id="CHEBI:33019"/>
        <dbReference type="ChEBI" id="CHEBI:49249"/>
        <dbReference type="ChEBI" id="CHEBI:60374"/>
    </reaction>
    <physiologicalReaction direction="left-to-right" evidence="3">
        <dbReference type="Rhea" id="RHEA:68525"/>
    </physiologicalReaction>
</comment>
<comment type="catalytic activity">
    <reaction evidence="3">
        <text>(2E,6E)-farnesyl diphosphate = beta-bisabolene + diphosphate</text>
        <dbReference type="Rhea" id="RHEA:68528"/>
        <dbReference type="ChEBI" id="CHEBI:33019"/>
        <dbReference type="ChEBI" id="CHEBI:49249"/>
        <dbReference type="ChEBI" id="CHEBI:175763"/>
    </reaction>
    <physiologicalReaction direction="left-to-right" evidence="3">
        <dbReference type="Rhea" id="RHEA:68529"/>
    </physiologicalReaction>
</comment>
<comment type="catalytic activity">
    <reaction evidence="3">
        <text>(2E,6E)-farnesyl diphosphate = (Z)-gamma-bisabolene + diphosphate</text>
        <dbReference type="Rhea" id="RHEA:26081"/>
        <dbReference type="ChEBI" id="CHEBI:33019"/>
        <dbReference type="ChEBI" id="CHEBI:49238"/>
        <dbReference type="ChEBI" id="CHEBI:175763"/>
        <dbReference type="EC" id="4.2.3.40"/>
    </reaction>
    <physiologicalReaction direction="left-to-right" evidence="3">
        <dbReference type="Rhea" id="RHEA:26082"/>
    </physiologicalReaction>
</comment>
<comment type="catalytic activity">
    <reaction evidence="3">
        <text>(2E,6E)-farnesyl diphosphate = (E)-gamma-bisabolene + diphosphate</text>
        <dbReference type="Rhea" id="RHEA:28298"/>
        <dbReference type="ChEBI" id="CHEBI:33019"/>
        <dbReference type="ChEBI" id="CHEBI:49239"/>
        <dbReference type="ChEBI" id="CHEBI:175763"/>
        <dbReference type="EC" id="4.2.3.59"/>
    </reaction>
    <physiologicalReaction direction="left-to-right" evidence="3">
        <dbReference type="Rhea" id="RHEA:28299"/>
    </physiologicalReaction>
</comment>
<comment type="catalytic activity">
    <reaction evidence="3">
        <text>(2Z,6Z)-farnesyl diphosphate = (E)-gamma-bisabolene + diphosphate</text>
        <dbReference type="Rhea" id="RHEA:68468"/>
        <dbReference type="ChEBI" id="CHEBI:33019"/>
        <dbReference type="ChEBI" id="CHEBI:49239"/>
        <dbReference type="ChEBI" id="CHEBI:60374"/>
    </reaction>
    <physiologicalReaction direction="left-to-right" evidence="3">
        <dbReference type="Rhea" id="RHEA:68469"/>
    </physiologicalReaction>
</comment>
<comment type="cofactor">
    <cofactor evidence="1">
        <name>Mg(2+)</name>
        <dbReference type="ChEBI" id="CHEBI:18420"/>
    </cofactor>
    <cofactor evidence="1">
        <name>Mn(2+)</name>
        <dbReference type="ChEBI" id="CHEBI:29035"/>
    </cofactor>
    <text evidence="1">Binds 3 Mg(2+) or Mn(2+) ions per subunit.</text>
</comment>
<comment type="pathway">
    <text evidence="4">Secondary metabolite biosynthesis; terpenoid biosynthesis.</text>
</comment>
<comment type="tissue specificity">
    <text evidence="3 4">Mostly expressed in roots, to a lower extent in flowers and, at low levels, in fruits.</text>
</comment>
<comment type="domain">
    <text evidence="2">The Asp-Asp-Xaa-Xaa-Asp/Glu (DDXXD/E) motif is important for the catalytic activity, presumably through binding to Mg(2+).</text>
</comment>
<comment type="similarity">
    <text evidence="7">Belongs to the terpene synthase family. Tpsa subfamily.</text>
</comment>
<proteinExistence type="evidence at protein level"/>
<evidence type="ECO:0000250" key="1">
    <source>
        <dbReference type="UniProtKB" id="A0A1C9J6A7"/>
    </source>
</evidence>
<evidence type="ECO:0000250" key="2">
    <source>
        <dbReference type="UniProtKB" id="Q40577"/>
    </source>
</evidence>
<evidence type="ECO:0000269" key="3">
    <source>
    </source>
</evidence>
<evidence type="ECO:0000269" key="4">
    <source>
    </source>
</evidence>
<evidence type="ECO:0000303" key="5">
    <source>
    </source>
</evidence>
<evidence type="ECO:0000303" key="6">
    <source>
    </source>
</evidence>
<evidence type="ECO:0000305" key="7"/>